<protein>
    <recommendedName>
        <fullName>Vascular endothelial growth factor A</fullName>
        <shortName>VEGF-A</shortName>
    </recommendedName>
    <alternativeName>
        <fullName>Vascular permeability factor</fullName>
        <shortName>VPF</shortName>
    </alternativeName>
</protein>
<proteinExistence type="evidence at protein level"/>
<accession>P15691</accession>
<keyword id="KW-0025">Alternative splicing</keyword>
<keyword id="KW-0037">Angiogenesis</keyword>
<keyword id="KW-0217">Developmental protein</keyword>
<keyword id="KW-0221">Differentiation</keyword>
<keyword id="KW-0903">Direct protein sequencing</keyword>
<keyword id="KW-1015">Disulfide bond</keyword>
<keyword id="KW-0325">Glycoprotein</keyword>
<keyword id="KW-0339">Growth factor</keyword>
<keyword id="KW-0358">Heparin-binding</keyword>
<keyword id="KW-0497">Mitogen</keyword>
<keyword id="KW-1185">Reference proteome</keyword>
<keyword id="KW-0964">Secreted</keyword>
<keyword id="KW-0732">Signal</keyword>
<name>VEGFA_BOVIN</name>
<sequence>MNFLLSWVHWSLALLLYLHHAKWSQAAPMAEGGQKPHEVVKFMDVYQRSFCRPIETLVDIFQEYPDEIEFIFKPSCVPLMRCGGCCNDESLECVPTEEFNITMQIMRIKPHQSQHIGEMSFLQHNKCECRPKKDKARQENPCGPCSERRKHLFVQDPQTCKCSCKNTDSRCKARQLELNERTCRCDKPRR</sequence>
<dbReference type="EMBL" id="M32976">
    <property type="protein sequence ID" value="AAA30502.1"/>
    <property type="molecule type" value="mRNA"/>
</dbReference>
<dbReference type="EMBL" id="M31836">
    <property type="protein sequence ID" value="AAA30804.1"/>
    <property type="molecule type" value="mRNA"/>
</dbReference>
<dbReference type="EMBL" id="M33750">
    <property type="protein sequence ID" value="AAA30805.1"/>
    <property type="molecule type" value="mRNA"/>
</dbReference>
<dbReference type="PIR" id="A33787">
    <property type="entry name" value="A33787"/>
</dbReference>
<dbReference type="PIR" id="B40080">
    <property type="entry name" value="B40080"/>
</dbReference>
<dbReference type="RefSeq" id="NP_001303884.1">
    <property type="nucleotide sequence ID" value="NM_001316955.1"/>
</dbReference>
<dbReference type="RefSeq" id="NP_001303885.1">
    <property type="nucleotide sequence ID" value="NM_001316956.1"/>
</dbReference>
<dbReference type="RefSeq" id="NP_001303921.1">
    <property type="nucleotide sequence ID" value="NM_001316992.1"/>
</dbReference>
<dbReference type="RefSeq" id="NP_001303922.1">
    <property type="nucleotide sequence ID" value="NM_001316993.1"/>
</dbReference>
<dbReference type="RefSeq" id="NP_776641.1">
    <molecule id="P15691-1"/>
    <property type="nucleotide sequence ID" value="NM_174216.2"/>
</dbReference>
<dbReference type="SMR" id="P15691"/>
<dbReference type="CORUM" id="P15691"/>
<dbReference type="FunCoup" id="P15691">
    <property type="interactions" value="650"/>
</dbReference>
<dbReference type="STRING" id="9913.ENSBTAP00000055683"/>
<dbReference type="GlyCosmos" id="P15691">
    <property type="glycosylation" value="1 site, No reported glycans"/>
</dbReference>
<dbReference type="GlyGen" id="P15691">
    <property type="glycosylation" value="1 site"/>
</dbReference>
<dbReference type="PaxDb" id="9913-ENSBTAP00000056005"/>
<dbReference type="GeneID" id="281572"/>
<dbReference type="KEGG" id="bta:281572"/>
<dbReference type="CTD" id="7422"/>
<dbReference type="VEuPathDB" id="HostDB:ENSBTAG00000005339"/>
<dbReference type="eggNOG" id="ENOG502QVI8">
    <property type="taxonomic scope" value="Eukaryota"/>
</dbReference>
<dbReference type="InParanoid" id="P15691"/>
<dbReference type="OrthoDB" id="6370328at2759"/>
<dbReference type="Reactome" id="R-BTA-114608">
    <property type="pathway name" value="Platelet degranulation"/>
</dbReference>
<dbReference type="Reactome" id="R-BTA-194313">
    <property type="pathway name" value="VEGF ligand-receptor interactions"/>
</dbReference>
<dbReference type="Reactome" id="R-BTA-195399">
    <property type="pathway name" value="VEGF binds to VEGFR leading to receptor dimerization"/>
</dbReference>
<dbReference type="Reactome" id="R-BTA-4420097">
    <property type="pathway name" value="VEGFA-VEGFR2 Pathway"/>
</dbReference>
<dbReference type="Reactome" id="R-BTA-5218921">
    <property type="pathway name" value="VEGFR2 mediated cell proliferation"/>
</dbReference>
<dbReference type="Proteomes" id="UP000009136">
    <property type="component" value="Chromosome 23"/>
</dbReference>
<dbReference type="Bgee" id="ENSBTAG00000005339">
    <property type="expression patterns" value="Expressed in cardiac atrium and 102 other cell types or tissues"/>
</dbReference>
<dbReference type="GO" id="GO:0005615">
    <property type="term" value="C:extracellular space"/>
    <property type="evidence" value="ECO:0000314"/>
    <property type="project" value="BHF-UCL"/>
</dbReference>
<dbReference type="GO" id="GO:0016020">
    <property type="term" value="C:membrane"/>
    <property type="evidence" value="ECO:0007669"/>
    <property type="project" value="InterPro"/>
</dbReference>
<dbReference type="GO" id="GO:0042056">
    <property type="term" value="F:chemoattractant activity"/>
    <property type="evidence" value="ECO:0000318"/>
    <property type="project" value="GO_Central"/>
</dbReference>
<dbReference type="GO" id="GO:0005125">
    <property type="term" value="F:cytokine activity"/>
    <property type="evidence" value="ECO:0000314"/>
    <property type="project" value="BHF-UCL"/>
</dbReference>
<dbReference type="GO" id="GO:0008083">
    <property type="term" value="F:growth factor activity"/>
    <property type="evidence" value="ECO:0000314"/>
    <property type="project" value="BHF-UCL"/>
</dbReference>
<dbReference type="GO" id="GO:0008201">
    <property type="term" value="F:heparin binding"/>
    <property type="evidence" value="ECO:0007669"/>
    <property type="project" value="UniProtKB-KW"/>
</dbReference>
<dbReference type="GO" id="GO:0042803">
    <property type="term" value="F:protein homodimerization activity"/>
    <property type="evidence" value="ECO:0000314"/>
    <property type="project" value="BHF-UCL"/>
</dbReference>
<dbReference type="GO" id="GO:0005172">
    <property type="term" value="F:vascular endothelial growth factor receptor binding"/>
    <property type="evidence" value="ECO:0000318"/>
    <property type="project" value="GO_Central"/>
</dbReference>
<dbReference type="GO" id="GO:0071456">
    <property type="term" value="P:cellular response to hypoxia"/>
    <property type="evidence" value="ECO:0000314"/>
    <property type="project" value="MGI"/>
</dbReference>
<dbReference type="GO" id="GO:0050930">
    <property type="term" value="P:induction of positive chemotaxis"/>
    <property type="evidence" value="ECO:0000318"/>
    <property type="project" value="GO_Central"/>
</dbReference>
<dbReference type="GO" id="GO:0097475">
    <property type="term" value="P:motor neuron migration"/>
    <property type="evidence" value="ECO:0000250"/>
    <property type="project" value="UniProtKB"/>
</dbReference>
<dbReference type="GO" id="GO:0045766">
    <property type="term" value="P:positive regulation of angiogenesis"/>
    <property type="evidence" value="ECO:0000250"/>
    <property type="project" value="UniProtKB"/>
</dbReference>
<dbReference type="GO" id="GO:0051781">
    <property type="term" value="P:positive regulation of cell division"/>
    <property type="evidence" value="ECO:0007669"/>
    <property type="project" value="UniProtKB-KW"/>
</dbReference>
<dbReference type="GO" id="GO:0010595">
    <property type="term" value="P:positive regulation of endothelial cell migration"/>
    <property type="evidence" value="ECO:0000250"/>
    <property type="project" value="UniProtKB"/>
</dbReference>
<dbReference type="GO" id="GO:0001938">
    <property type="term" value="P:positive regulation of endothelial cell proliferation"/>
    <property type="evidence" value="ECO:0000314"/>
    <property type="project" value="BHF-UCL"/>
</dbReference>
<dbReference type="GO" id="GO:0051894">
    <property type="term" value="P:positive regulation of focal adhesion assembly"/>
    <property type="evidence" value="ECO:0000250"/>
    <property type="project" value="UniProtKB"/>
</dbReference>
<dbReference type="GO" id="GO:0060754">
    <property type="term" value="P:positive regulation of mast cell chemotaxis"/>
    <property type="evidence" value="ECO:0000318"/>
    <property type="project" value="GO_Central"/>
</dbReference>
<dbReference type="GO" id="GO:0050731">
    <property type="term" value="P:positive regulation of peptidyl-tyrosine phosphorylation"/>
    <property type="evidence" value="ECO:0000250"/>
    <property type="project" value="UniProtKB"/>
</dbReference>
<dbReference type="GO" id="GO:0001934">
    <property type="term" value="P:positive regulation of protein phosphorylation"/>
    <property type="evidence" value="ECO:0000250"/>
    <property type="project" value="UniProtKB"/>
</dbReference>
<dbReference type="GO" id="GO:0031334">
    <property type="term" value="P:positive regulation of protein-containing complex assembly"/>
    <property type="evidence" value="ECO:0000250"/>
    <property type="project" value="UniProtKB"/>
</dbReference>
<dbReference type="GO" id="GO:0001666">
    <property type="term" value="P:response to hypoxia"/>
    <property type="evidence" value="ECO:0000318"/>
    <property type="project" value="GO_Central"/>
</dbReference>
<dbReference type="GO" id="GO:0002040">
    <property type="term" value="P:sprouting angiogenesis"/>
    <property type="evidence" value="ECO:0000318"/>
    <property type="project" value="GO_Central"/>
</dbReference>
<dbReference type="GO" id="GO:0035148">
    <property type="term" value="P:tube formation"/>
    <property type="evidence" value="ECO:0000250"/>
    <property type="project" value="UniProtKB"/>
</dbReference>
<dbReference type="GO" id="GO:0048010">
    <property type="term" value="P:vascular endothelial growth factor receptor signaling pathway"/>
    <property type="evidence" value="ECO:0000318"/>
    <property type="project" value="GO_Central"/>
</dbReference>
<dbReference type="GO" id="GO:0038084">
    <property type="term" value="P:vascular endothelial growth factor signaling pathway"/>
    <property type="evidence" value="ECO:0000318"/>
    <property type="project" value="GO_Central"/>
</dbReference>
<dbReference type="CDD" id="cd00135">
    <property type="entry name" value="PDGF"/>
    <property type="match status" value="1"/>
</dbReference>
<dbReference type="FunFam" id="2.10.160.10:FF:000001">
    <property type="entry name" value="Vascular endothelial growth factor A"/>
    <property type="match status" value="1"/>
</dbReference>
<dbReference type="FunFam" id="2.10.90.10:FF:000009">
    <property type="entry name" value="Vascular endothelial growth factor A"/>
    <property type="match status" value="1"/>
</dbReference>
<dbReference type="Gene3D" id="2.10.90.10">
    <property type="entry name" value="Cystine-knot cytokines"/>
    <property type="match status" value="1"/>
</dbReference>
<dbReference type="Gene3D" id="2.10.160.10">
    <property type="entry name" value="Vascular endothelial growth factor, heparin-binding domain"/>
    <property type="match status" value="1"/>
</dbReference>
<dbReference type="InterPro" id="IPR029034">
    <property type="entry name" value="Cystine-knot_cytokine"/>
</dbReference>
<dbReference type="InterPro" id="IPR023581">
    <property type="entry name" value="PD_growth_factor_CS"/>
</dbReference>
<dbReference type="InterPro" id="IPR000072">
    <property type="entry name" value="PDGF/VEGF_dom"/>
</dbReference>
<dbReference type="InterPro" id="IPR050507">
    <property type="entry name" value="PDGF/VEGF_growth_factor"/>
</dbReference>
<dbReference type="InterPro" id="IPR027928">
    <property type="entry name" value="VEGF_C"/>
</dbReference>
<dbReference type="InterPro" id="IPR036841">
    <property type="entry name" value="VEGF_C_sf"/>
</dbReference>
<dbReference type="PANTHER" id="PTHR12025">
    <property type="entry name" value="VASCULAR ENDOTHELIAL GROWTH FACTOR"/>
    <property type="match status" value="1"/>
</dbReference>
<dbReference type="PANTHER" id="PTHR12025:SF5">
    <property type="entry name" value="VASCULAR ENDOTHELIAL GROWTH FACTOR A, LONG FORM"/>
    <property type="match status" value="1"/>
</dbReference>
<dbReference type="Pfam" id="PF00341">
    <property type="entry name" value="PDGF"/>
    <property type="match status" value="1"/>
</dbReference>
<dbReference type="Pfam" id="PF14554">
    <property type="entry name" value="VEGF_C"/>
    <property type="match status" value="1"/>
</dbReference>
<dbReference type="SMART" id="SM00141">
    <property type="entry name" value="PDGF"/>
    <property type="match status" value="1"/>
</dbReference>
<dbReference type="SUPFAM" id="SSF57501">
    <property type="entry name" value="Cystine-knot cytokines"/>
    <property type="match status" value="1"/>
</dbReference>
<dbReference type="SUPFAM" id="SSF57593">
    <property type="entry name" value="Heparin-binding domain from vascular endothelial growth factor"/>
    <property type="match status" value="1"/>
</dbReference>
<dbReference type="PROSITE" id="PS00249">
    <property type="entry name" value="PDGF_1"/>
    <property type="match status" value="1"/>
</dbReference>
<dbReference type="PROSITE" id="PS50278">
    <property type="entry name" value="PDGF_2"/>
    <property type="match status" value="1"/>
</dbReference>
<evidence type="ECO:0000250" key="1"/>
<evidence type="ECO:0000250" key="2">
    <source>
        <dbReference type="UniProtKB" id="P15692"/>
    </source>
</evidence>
<evidence type="ECO:0000250" key="3">
    <source>
        <dbReference type="UniProtKB" id="P16612"/>
    </source>
</evidence>
<evidence type="ECO:0000250" key="4">
    <source>
        <dbReference type="UniProtKB" id="Q00731"/>
    </source>
</evidence>
<evidence type="ECO:0000255" key="5"/>
<evidence type="ECO:0000269" key="6">
    <source>
    </source>
</evidence>
<evidence type="ECO:0000269" key="7">
    <source>
    </source>
</evidence>
<evidence type="ECO:0000303" key="8">
    <source>
    </source>
</evidence>
<evidence type="ECO:0000305" key="9"/>
<comment type="function">
    <text evidence="2 4">Growth factor active in angiogenesis, vasculogenesis and endothelial cell growth. Induces endothelial cell proliferation, promotes cell migration, inhibits apoptosis and induces permeabilization of blood vessels. Binds to the FLT1/VEGFR1 and KDR/VEGFR2 receptors, heparan sulfate and heparin (By similarity). Binding to NRP1 receptor initiates a signaling pathway needed for motor neuron axon guidance and cell body migration, including for the caudal migration of facial motor neurons from rhombomere 4 to rhombomere 6 during embryonic development (By similarity). Also binds the DEAR/FBXW7-AS1 receptor (By similarity).</text>
</comment>
<comment type="subunit">
    <text evidence="2 3">Homodimer; disulfide-linked (By similarity). Also found as heterodimer with PGF (By similarity). Interacts with NRP1 (By similarity). Interacts with BSG (By similarity). Interacts with CD82; this interaction inhibits VEGFA-mediated signaling pathway (By similarity).</text>
</comment>
<comment type="subcellular location">
    <subcellularLocation>
        <location evidence="1">Secreted</location>
    </subcellularLocation>
    <text evidence="1">Secreted but remains associated to cells or to the extracellular matrix unless released by heparin.</text>
</comment>
<comment type="alternative products">
    <event type="alternative splicing"/>
    <isoform>
        <id>P15691-1</id>
        <name>Alpha</name>
        <sequence type="displayed"/>
    </isoform>
    <isoform>
        <id>P15691-2</id>
        <name>Beta</name>
        <sequence type="described" ref="VSP_004613 VSP_004614"/>
    </isoform>
</comment>
<comment type="similarity">
    <text evidence="9">Belongs to the PDGF/VEGF growth factor family.</text>
</comment>
<reference key="1">
    <citation type="journal article" date="1989" name="Science">
        <title>Vascular endothelial growth factor is a secreted angiogenic mitogen.</title>
        <authorList>
            <person name="Leung D.W."/>
            <person name="Cachianes G."/>
            <person name="Kuang W.-J."/>
            <person name="Goeddel D.V."/>
            <person name="Ferrara N."/>
        </authorList>
    </citation>
    <scope>NUCLEOTIDE SEQUENCE [MRNA]</scope>
    <scope>PROTEIN SEQUENCE OF 27-47</scope>
</reference>
<reference key="2">
    <citation type="journal article" date="1989" name="Biochem. Biophys. Res. Commun.">
        <title>Vascular endothelial growth factor: a new member of the platelet-derived growth factor gene family.</title>
        <authorList>
            <person name="Tischer E."/>
            <person name="Gospodarowicz D."/>
            <person name="Mitchell R."/>
            <person name="Silva M."/>
            <person name="Schilling J."/>
            <person name="Lau K."/>
            <person name="Crisp T."/>
            <person name="Fiddes J.C."/>
            <person name="Abraham J.A."/>
        </authorList>
    </citation>
    <scope>NUCLEOTIDE SEQUENCE [MRNA] OF 27-190 (ISOFORMS ALPHA AND BETA)</scope>
</reference>
<reference key="3">
    <citation type="journal article" date="1989" name="Biochem. Biophys. Res. Commun.">
        <title>Pituitary follicular cells secrete a novel heparin-binding growth factor specific for vascular endothelial cells.</title>
        <authorList>
            <person name="Ferrara N."/>
            <person name="Henzel W.J."/>
        </authorList>
    </citation>
    <scope>PROTEIN SEQUENCE OF 27-31</scope>
</reference>
<gene>
    <name type="primary">VEGFA</name>
    <name type="synonym">VEGF</name>
</gene>
<feature type="signal peptide" evidence="6 7">
    <location>
        <begin position="1"/>
        <end position="26"/>
    </location>
</feature>
<feature type="chain" id="PRO_0000023383" description="Vascular endothelial growth factor A">
    <location>
        <begin position="27"/>
        <end position="190"/>
    </location>
</feature>
<feature type="glycosylation site" description="N-linked (GlcNAc...) asparagine" evidence="5">
    <location>
        <position position="100"/>
    </location>
</feature>
<feature type="disulfide bond" evidence="1">
    <location>
        <begin position="51"/>
        <end position="93"/>
    </location>
</feature>
<feature type="disulfide bond" description="Interchain" evidence="1">
    <location>
        <position position="76"/>
    </location>
</feature>
<feature type="disulfide bond" evidence="1">
    <location>
        <begin position="82"/>
        <end position="127"/>
    </location>
</feature>
<feature type="disulfide bond" description="Interchain" evidence="1">
    <location>
        <position position="85"/>
    </location>
</feature>
<feature type="disulfide bond" evidence="1">
    <location>
        <begin position="86"/>
        <end position="129"/>
    </location>
</feature>
<feature type="splice variant" id="VSP_004613" description="In isoform Beta." evidence="8">
    <location>
        <begin position="139"/>
        <end position="183"/>
    </location>
</feature>
<feature type="splice variant" id="VSP_004614" description="In isoform Beta." evidence="8">
    <original>R</original>
    <variation>K</variation>
    <location>
        <position position="184"/>
    </location>
</feature>
<organism>
    <name type="scientific">Bos taurus</name>
    <name type="common">Bovine</name>
    <dbReference type="NCBI Taxonomy" id="9913"/>
    <lineage>
        <taxon>Eukaryota</taxon>
        <taxon>Metazoa</taxon>
        <taxon>Chordata</taxon>
        <taxon>Craniata</taxon>
        <taxon>Vertebrata</taxon>
        <taxon>Euteleostomi</taxon>
        <taxon>Mammalia</taxon>
        <taxon>Eutheria</taxon>
        <taxon>Laurasiatheria</taxon>
        <taxon>Artiodactyla</taxon>
        <taxon>Ruminantia</taxon>
        <taxon>Pecora</taxon>
        <taxon>Bovidae</taxon>
        <taxon>Bovinae</taxon>
        <taxon>Bos</taxon>
    </lineage>
</organism>